<sequence length="367" mass="41392">MAFKLWLLDEETIYEHVFERYTQLEGQSGKLAQDLGIQDRRGGVLEITFEPSGLEGGRKKKRVRRRNKASSVEEDQNVAVDSYHVSVGQSISSLRSSRDNGNSTTGYVLWSTTPFFINWLLYSTSAAPFRLGSQVEVTCGSSCEGHKLELPRLVDLTGADRGKRGILELGAGISGILPVILGNFVDTYVSTDQKGILNKLKDNIMENLSQLTRKRCISRSLRLELPTVEPVGDADITAASLPSKSTLHLEVAALDWEKINLQDKKTHSLHPELSLIGETCSSVYVIAMDVIYNEYLIDPFLKTLKQLKHWLQTTYNLQFHVLVGIHLRSQEVTTLFLEKAIIEYDFTVYDIVDQVIQESRFNFYLIT</sequence>
<comment type="function">
    <text evidence="1">S-adenosyl-L-methionine-dependent protein-lysine N-methyltransferase that monomethylates 60S ribosomal protein L1 (RPL1A and RPL1B) at 'Lys-46'.</text>
</comment>
<comment type="similarity">
    <text evidence="3">Belongs to the class I-like SAM-binding methyltransferase superfamily. RKM5 family.</text>
</comment>
<name>RKM5_YEAS6</name>
<keyword id="KW-0489">Methyltransferase</keyword>
<keyword id="KW-0949">S-adenosyl-L-methionine</keyword>
<keyword id="KW-0808">Transferase</keyword>
<gene>
    <name type="primary">RKM5</name>
    <name type="ORF">AWRI1631_121860</name>
</gene>
<protein>
    <recommendedName>
        <fullName evidence="1">Ribosomal lysine N-methyltransferase 5</fullName>
        <ecNumber evidence="1">2.1.1.-</ecNumber>
    </recommendedName>
</protein>
<evidence type="ECO:0000250" key="1">
    <source>
        <dbReference type="UniProtKB" id="Q12367"/>
    </source>
</evidence>
<evidence type="ECO:0000250" key="2">
    <source>
        <dbReference type="UniProtKB" id="Q9H867"/>
    </source>
</evidence>
<evidence type="ECO:0000305" key="3"/>
<proteinExistence type="inferred from homology"/>
<organism>
    <name type="scientific">Saccharomyces cerevisiae (strain AWRI1631)</name>
    <name type="common">Baker's yeast</name>
    <dbReference type="NCBI Taxonomy" id="545124"/>
    <lineage>
        <taxon>Eukaryota</taxon>
        <taxon>Fungi</taxon>
        <taxon>Dikarya</taxon>
        <taxon>Ascomycota</taxon>
        <taxon>Saccharomycotina</taxon>
        <taxon>Saccharomycetes</taxon>
        <taxon>Saccharomycetales</taxon>
        <taxon>Saccharomycetaceae</taxon>
        <taxon>Saccharomyces</taxon>
    </lineage>
</organism>
<dbReference type="EC" id="2.1.1.-" evidence="1"/>
<dbReference type="EMBL" id="ABSV01001612">
    <property type="protein sequence ID" value="EDZ70621.1"/>
    <property type="molecule type" value="Genomic_DNA"/>
</dbReference>
<dbReference type="Proteomes" id="UP000008988">
    <property type="component" value="Unassembled WGS sequence"/>
</dbReference>
<dbReference type="GO" id="GO:0005829">
    <property type="term" value="C:cytosol"/>
    <property type="evidence" value="ECO:0007669"/>
    <property type="project" value="TreeGrafter"/>
</dbReference>
<dbReference type="GO" id="GO:0032991">
    <property type="term" value="C:protein-containing complex"/>
    <property type="evidence" value="ECO:0007669"/>
    <property type="project" value="TreeGrafter"/>
</dbReference>
<dbReference type="GO" id="GO:0008757">
    <property type="term" value="F:S-adenosylmethionine-dependent methyltransferase activity"/>
    <property type="evidence" value="ECO:0007669"/>
    <property type="project" value="UniProtKB-ARBA"/>
</dbReference>
<dbReference type="GO" id="GO:0032259">
    <property type="term" value="P:methylation"/>
    <property type="evidence" value="ECO:0007669"/>
    <property type="project" value="UniProtKB-KW"/>
</dbReference>
<dbReference type="Gene3D" id="3.40.50.150">
    <property type="entry name" value="Vaccinia Virus protein VP39"/>
    <property type="match status" value="1"/>
</dbReference>
<dbReference type="InterPro" id="IPR019410">
    <property type="entry name" value="Methyltransf_16"/>
</dbReference>
<dbReference type="InterPro" id="IPR029063">
    <property type="entry name" value="SAM-dependent_MTases_sf"/>
</dbReference>
<dbReference type="PANTHER" id="PTHR14614">
    <property type="entry name" value="HEPATOCELLULAR CARCINOMA-ASSOCIATED ANTIGEN"/>
    <property type="match status" value="1"/>
</dbReference>
<dbReference type="PANTHER" id="PTHR14614:SF109">
    <property type="entry name" value="RIBOSOMAL LYSINE N-METHYLTRANSFERASE 5"/>
    <property type="match status" value="1"/>
</dbReference>
<accession>B5VN66</accession>
<reference key="1">
    <citation type="journal article" date="2008" name="FEMS Yeast Res.">
        <title>Comparative genome analysis of a Saccharomyces cerevisiae wine strain.</title>
        <authorList>
            <person name="Borneman A.R."/>
            <person name="Forgan A.H."/>
            <person name="Pretorius I.S."/>
            <person name="Chambers P.J."/>
        </authorList>
    </citation>
    <scope>NUCLEOTIDE SEQUENCE [LARGE SCALE GENOMIC DNA]</scope>
    <source>
        <strain>AWRI1631</strain>
    </source>
</reference>
<feature type="chain" id="PRO_0000411047" description="Ribosomal lysine N-methyltransferase 5">
    <location>
        <begin position="1"/>
        <end position="367"/>
    </location>
</feature>
<feature type="binding site" evidence="2">
    <location>
        <position position="110"/>
    </location>
    <ligand>
        <name>S-adenosyl-L-methionine</name>
        <dbReference type="ChEBI" id="CHEBI:59789"/>
    </ligand>
</feature>
<feature type="binding site" evidence="2">
    <location>
        <begin position="170"/>
        <end position="172"/>
    </location>
    <ligand>
        <name>S-adenosyl-L-methionine</name>
        <dbReference type="ChEBI" id="CHEBI:59789"/>
    </ligand>
</feature>
<feature type="binding site" evidence="2">
    <location>
        <position position="192"/>
    </location>
    <ligand>
        <name>S-adenosyl-L-methionine</name>
        <dbReference type="ChEBI" id="CHEBI:59789"/>
    </ligand>
</feature>
<feature type="binding site" evidence="2">
    <location>
        <position position="256"/>
    </location>
    <ligand>
        <name>S-adenosyl-L-methionine</name>
        <dbReference type="ChEBI" id="CHEBI:59789"/>
    </ligand>
</feature>
<feature type="binding site" evidence="2">
    <location>
        <position position="288"/>
    </location>
    <ligand>
        <name>S-adenosyl-L-methionine</name>
        <dbReference type="ChEBI" id="CHEBI:59789"/>
    </ligand>
</feature>